<sequence>MTGCCTVLGAFLFEYDTPRIVLIRSRKVGLMNRTVQLLILAYVIGWVFVWEKGYQETDSVVSSVTVKAKGVTMTNTSKLGFRIWDVADYVIPAQEENSVFIMTNMVITMNQTQGLCPEIPGKTTVCETDANCTAGSAGTHSSGVATGRCVSFNGTLKTCEVAAWCPVEDDTEVPKPAFLKAAENFTLLVKNNIWYPKFNFSKRNILPNITTAYLKTCIYDAKTDPFCPIFRLGKIVESAGHSFQDIAIEGGIMGIQIKWNCNLDRAASFCLPRYSFRRLDTRDLAHNVSPGYNFRFAKYYSDLKGAEHRTLIKAYGIRFDIIVFGKAGKFDIIPTMINIGSGLALLGVATVLCDVIVLYCMKKRYYYREKKYKYVEDYEQGLGNQMEQ</sequence>
<comment type="function">
    <text evidence="2 3 4">ATP-gated nonselective transmembrane cation channel permeable to potassium, sodium and calcium. CTP, but not GTP or UTP, functions as a weak affinity agonist for P2RX4 (By similarity). Activated by extracellularly released ATP, it plays multiple role in immunity and central nervous system physiology (By similarity). Could also function as an ATP-gated cation channel of lysosomal membranes (By similarity).</text>
</comment>
<comment type="catalytic activity">
    <reaction evidence="3">
        <text>K(+)(in) = K(+)(out)</text>
        <dbReference type="Rhea" id="RHEA:29463"/>
        <dbReference type="ChEBI" id="CHEBI:29103"/>
    </reaction>
</comment>
<comment type="catalytic activity">
    <reaction evidence="3">
        <text>Na(+)(in) = Na(+)(out)</text>
        <dbReference type="Rhea" id="RHEA:34963"/>
        <dbReference type="ChEBI" id="CHEBI:29101"/>
    </reaction>
</comment>
<comment type="catalytic activity">
    <reaction evidence="3">
        <text>Ca(2+)(in) = Ca(2+)(out)</text>
        <dbReference type="Rhea" id="RHEA:29671"/>
        <dbReference type="ChEBI" id="CHEBI:29108"/>
    </reaction>
</comment>
<comment type="activity regulation">
    <text evidence="2 3">Activated by ATP (By similarity). pH-dependent and inhibited by acidic pH (By similarity).</text>
</comment>
<comment type="subunit">
    <text evidence="2 3">Functional P2RXs are organized as homomeric and heteromeric trimers. Forms heterotrimer with P2RX1 (By similarity). Interacts with P2RX7 (via C-terminus); this interaction is functional only in the presence of ATP (By similarity). Forms heterotrimer with P2RX4; functional differences between homomeric P2RX4 and P2RX4/6 heterotrimer are minor (By similarity). Interacts with AP1M2 (By similarity).</text>
</comment>
<comment type="subcellular location">
    <subcellularLocation>
        <location evidence="3">Cell membrane</location>
        <topology evidence="1">Multi-pass membrane protein</topology>
    </subcellularLocation>
    <subcellularLocation>
        <location evidence="3">Lysosome membrane</location>
        <topology evidence="5">Multi-pass membrane protein</topology>
    </subcellularLocation>
</comment>
<comment type="similarity">
    <text evidence="6">Belongs to the P2X receptor family.</text>
</comment>
<evidence type="ECO:0000250" key="1">
    <source>
        <dbReference type="UniProtKB" id="F8W463"/>
    </source>
</evidence>
<evidence type="ECO:0000250" key="2">
    <source>
        <dbReference type="UniProtKB" id="P51577"/>
    </source>
</evidence>
<evidence type="ECO:0000250" key="3">
    <source>
        <dbReference type="UniProtKB" id="Q99571"/>
    </source>
</evidence>
<evidence type="ECO:0000250" key="4">
    <source>
        <dbReference type="UniProtKB" id="Q9JJX6"/>
    </source>
</evidence>
<evidence type="ECO:0000255" key="5"/>
<evidence type="ECO:0000305" key="6"/>
<protein>
    <recommendedName>
        <fullName>P2X purinoceptor 4</fullName>
        <shortName>P2X4</shortName>
    </recommendedName>
    <alternativeName>
        <fullName>ATP receptor</fullName>
    </alternativeName>
    <alternativeName>
        <fullName>Purinergic receptor</fullName>
    </alternativeName>
</protein>
<organism>
    <name type="scientific">Bos taurus</name>
    <name type="common">Bovine</name>
    <dbReference type="NCBI Taxonomy" id="9913"/>
    <lineage>
        <taxon>Eukaryota</taxon>
        <taxon>Metazoa</taxon>
        <taxon>Chordata</taxon>
        <taxon>Craniata</taxon>
        <taxon>Vertebrata</taxon>
        <taxon>Euteleostomi</taxon>
        <taxon>Mammalia</taxon>
        <taxon>Eutheria</taxon>
        <taxon>Laurasiatheria</taxon>
        <taxon>Artiodactyla</taxon>
        <taxon>Ruminantia</taxon>
        <taxon>Pecora</taxon>
        <taxon>Bovidae</taxon>
        <taxon>Bovinae</taxon>
        <taxon>Bos</taxon>
    </lineage>
</organism>
<name>P2RX4_BOVIN</name>
<dbReference type="EMBL" id="BT020829">
    <property type="protein sequence ID" value="AAX08846.1"/>
    <property type="molecule type" value="mRNA"/>
</dbReference>
<dbReference type="EMBL" id="BC120340">
    <property type="protein sequence ID" value="AAI20341.1"/>
    <property type="molecule type" value="mRNA"/>
</dbReference>
<dbReference type="RefSeq" id="NP_001029221.1">
    <property type="nucleotide sequence ID" value="NM_001034049.1"/>
</dbReference>
<dbReference type="SMR" id="Q5E9U1"/>
<dbReference type="FunCoup" id="Q5E9U1">
    <property type="interactions" value="66"/>
</dbReference>
<dbReference type="STRING" id="9913.ENSBTAP00000014321"/>
<dbReference type="GlyCosmos" id="Q5E9U1">
    <property type="glycosylation" value="7 sites, No reported glycans"/>
</dbReference>
<dbReference type="GlyGen" id="Q5E9U1">
    <property type="glycosylation" value="7 sites"/>
</dbReference>
<dbReference type="PaxDb" id="9913-ENSBTAP00000014321"/>
<dbReference type="Ensembl" id="ENSBTAT00000014321.2">
    <property type="protein sequence ID" value="ENSBTAP00000014321.1"/>
    <property type="gene ID" value="ENSBTAG00000010812.4"/>
</dbReference>
<dbReference type="GeneID" id="338036"/>
<dbReference type="KEGG" id="bta:338036"/>
<dbReference type="CTD" id="5025"/>
<dbReference type="VEuPathDB" id="HostDB:ENSBTAG00000010812"/>
<dbReference type="VGNC" id="VGNC:32520">
    <property type="gene designation" value="P2RX4"/>
</dbReference>
<dbReference type="eggNOG" id="ENOG502QSUI">
    <property type="taxonomic scope" value="Eukaryota"/>
</dbReference>
<dbReference type="GeneTree" id="ENSGT01020000230351"/>
<dbReference type="HOGENOM" id="CLU_034469_2_0_1"/>
<dbReference type="InParanoid" id="Q5E9U1"/>
<dbReference type="OMA" id="NNCVPGY"/>
<dbReference type="OrthoDB" id="494673at2759"/>
<dbReference type="TreeFam" id="TF328633"/>
<dbReference type="Reactome" id="R-BTA-139853">
    <property type="pathway name" value="Elevation of cytosolic Ca2+ levels"/>
</dbReference>
<dbReference type="Reactome" id="R-BTA-418346">
    <property type="pathway name" value="Platelet homeostasis"/>
</dbReference>
<dbReference type="Proteomes" id="UP000009136">
    <property type="component" value="Chromosome 17"/>
</dbReference>
<dbReference type="Bgee" id="ENSBTAG00000010812">
    <property type="expression patterns" value="Expressed in ascending colon and 107 other cell types or tissues"/>
</dbReference>
<dbReference type="GO" id="GO:0005765">
    <property type="term" value="C:lysosomal membrane"/>
    <property type="evidence" value="ECO:0000250"/>
    <property type="project" value="UniProtKB"/>
</dbReference>
<dbReference type="GO" id="GO:0048471">
    <property type="term" value="C:perinuclear region of cytoplasm"/>
    <property type="evidence" value="ECO:0007669"/>
    <property type="project" value="Ensembl"/>
</dbReference>
<dbReference type="GO" id="GO:0005886">
    <property type="term" value="C:plasma membrane"/>
    <property type="evidence" value="ECO:0000250"/>
    <property type="project" value="UniProtKB"/>
</dbReference>
<dbReference type="GO" id="GO:0098794">
    <property type="term" value="C:postsynapse"/>
    <property type="evidence" value="ECO:0007669"/>
    <property type="project" value="GOC"/>
</dbReference>
<dbReference type="GO" id="GO:0005524">
    <property type="term" value="F:ATP binding"/>
    <property type="evidence" value="ECO:0007669"/>
    <property type="project" value="UniProtKB-KW"/>
</dbReference>
<dbReference type="GO" id="GO:0035381">
    <property type="term" value="F:ATP-gated ion channel activity"/>
    <property type="evidence" value="ECO:0000250"/>
    <property type="project" value="UniProtKB"/>
</dbReference>
<dbReference type="GO" id="GO:0045296">
    <property type="term" value="F:cadherin binding"/>
    <property type="evidence" value="ECO:0007669"/>
    <property type="project" value="Ensembl"/>
</dbReference>
<dbReference type="GO" id="GO:0004931">
    <property type="term" value="F:extracellularly ATP-gated monoatomic cation channel activity"/>
    <property type="evidence" value="ECO:0000250"/>
    <property type="project" value="UniProtKB"/>
</dbReference>
<dbReference type="GO" id="GO:0042802">
    <property type="term" value="F:identical protein binding"/>
    <property type="evidence" value="ECO:0007669"/>
    <property type="project" value="Ensembl"/>
</dbReference>
<dbReference type="GO" id="GO:0099604">
    <property type="term" value="F:ligand-gated calcium channel activity"/>
    <property type="evidence" value="ECO:0007669"/>
    <property type="project" value="Ensembl"/>
</dbReference>
<dbReference type="GO" id="GO:0001614">
    <property type="term" value="F:purinergic nucleotide receptor activity"/>
    <property type="evidence" value="ECO:0007669"/>
    <property type="project" value="Ensembl"/>
</dbReference>
<dbReference type="GO" id="GO:0097190">
    <property type="term" value="P:apoptotic signaling pathway"/>
    <property type="evidence" value="ECO:0007669"/>
    <property type="project" value="Ensembl"/>
</dbReference>
<dbReference type="GO" id="GO:0070588">
    <property type="term" value="P:calcium ion transmembrane transport"/>
    <property type="evidence" value="ECO:0000250"/>
    <property type="project" value="UniProtKB"/>
</dbReference>
<dbReference type="GO" id="GO:0071318">
    <property type="term" value="P:cellular response to ATP"/>
    <property type="evidence" value="ECO:0000250"/>
    <property type="project" value="UniProtKB"/>
</dbReference>
<dbReference type="GO" id="GO:0071294">
    <property type="term" value="P:cellular response to zinc ion"/>
    <property type="evidence" value="ECO:0000250"/>
    <property type="project" value="UniProtKB"/>
</dbReference>
<dbReference type="GO" id="GO:0051899">
    <property type="term" value="P:membrane depolarization"/>
    <property type="evidence" value="ECO:0007669"/>
    <property type="project" value="Ensembl"/>
</dbReference>
<dbReference type="GO" id="GO:0034220">
    <property type="term" value="P:monoatomic ion transmembrane transport"/>
    <property type="evidence" value="ECO:0000250"/>
    <property type="project" value="UniProtKB"/>
</dbReference>
<dbReference type="GO" id="GO:0010614">
    <property type="term" value="P:negative regulation of cardiac muscle hypertrophy"/>
    <property type="evidence" value="ECO:0007669"/>
    <property type="project" value="Ensembl"/>
</dbReference>
<dbReference type="GO" id="GO:0043536">
    <property type="term" value="P:positive regulation of blood vessel endothelial cell migration"/>
    <property type="evidence" value="ECO:0007669"/>
    <property type="project" value="Ensembl"/>
</dbReference>
<dbReference type="GO" id="GO:0010524">
    <property type="term" value="P:positive regulation of calcium ion transport into cytosol"/>
    <property type="evidence" value="ECO:0007669"/>
    <property type="project" value="Ensembl"/>
</dbReference>
<dbReference type="GO" id="GO:0050850">
    <property type="term" value="P:positive regulation of calcium-mediated signaling"/>
    <property type="evidence" value="ECO:0007669"/>
    <property type="project" value="Ensembl"/>
</dbReference>
<dbReference type="GO" id="GO:2001028">
    <property type="term" value="P:positive regulation of endothelial cell chemotaxis"/>
    <property type="evidence" value="ECO:0007669"/>
    <property type="project" value="Ensembl"/>
</dbReference>
<dbReference type="GO" id="GO:0008217">
    <property type="term" value="P:regulation of blood pressure"/>
    <property type="evidence" value="ECO:0007669"/>
    <property type="project" value="Ensembl"/>
</dbReference>
<dbReference type="GO" id="GO:0055117">
    <property type="term" value="P:regulation of cardiac muscle contraction"/>
    <property type="evidence" value="ECO:0007669"/>
    <property type="project" value="Ensembl"/>
</dbReference>
<dbReference type="GO" id="GO:0055119">
    <property type="term" value="P:relaxation of cardiac muscle"/>
    <property type="evidence" value="ECO:0007669"/>
    <property type="project" value="Ensembl"/>
</dbReference>
<dbReference type="GO" id="GO:0034405">
    <property type="term" value="P:response to fluid shear stress"/>
    <property type="evidence" value="ECO:0007669"/>
    <property type="project" value="Ensembl"/>
</dbReference>
<dbReference type="FunFam" id="1.10.287.940:FF:000001">
    <property type="entry name" value="P2X purinoceptor"/>
    <property type="match status" value="1"/>
</dbReference>
<dbReference type="FunFam" id="2.60.490.10:FF:000001">
    <property type="entry name" value="P2X purinoceptor"/>
    <property type="match status" value="1"/>
</dbReference>
<dbReference type="FunFam" id="1.10.287.940:FF:000010">
    <property type="entry name" value="P2X receptor E"/>
    <property type="match status" value="1"/>
</dbReference>
<dbReference type="Gene3D" id="1.10.287.940">
    <property type="entry name" value="atp-gated p2x4 ion channel"/>
    <property type="match status" value="1"/>
</dbReference>
<dbReference type="Gene3D" id="2.60.490.10">
    <property type="entry name" value="atp-gated p2x4 ion channel domain"/>
    <property type="match status" value="1"/>
</dbReference>
<dbReference type="InterPro" id="IPR003047">
    <property type="entry name" value="P2X4_purnocptor"/>
</dbReference>
<dbReference type="InterPro" id="IPR027309">
    <property type="entry name" value="P2X_extracellular_dom_sf"/>
</dbReference>
<dbReference type="InterPro" id="IPR001429">
    <property type="entry name" value="P2X_purnocptor"/>
</dbReference>
<dbReference type="InterPro" id="IPR053792">
    <property type="entry name" value="P2X_RECEPTOR_CS"/>
</dbReference>
<dbReference type="NCBIfam" id="TIGR00863">
    <property type="entry name" value="P2X"/>
    <property type="match status" value="1"/>
</dbReference>
<dbReference type="PANTHER" id="PTHR10125">
    <property type="entry name" value="P2X PURINOCEPTOR"/>
    <property type="match status" value="1"/>
</dbReference>
<dbReference type="PANTHER" id="PTHR10125:SF18">
    <property type="entry name" value="P2X PURINOCEPTOR 4"/>
    <property type="match status" value="1"/>
</dbReference>
<dbReference type="Pfam" id="PF00864">
    <property type="entry name" value="P2X_receptor"/>
    <property type="match status" value="1"/>
</dbReference>
<dbReference type="PIRSF" id="PIRSF005713">
    <property type="entry name" value="P2X_purinoceptor"/>
    <property type="match status" value="1"/>
</dbReference>
<dbReference type="PRINTS" id="PR01311">
    <property type="entry name" value="P2X4RECEPTOR"/>
</dbReference>
<dbReference type="PRINTS" id="PR01307">
    <property type="entry name" value="P2XRECEPTOR"/>
</dbReference>
<dbReference type="PROSITE" id="PS01212">
    <property type="entry name" value="P2X_RECEPTOR"/>
    <property type="match status" value="1"/>
</dbReference>
<feature type="chain" id="PRO_0000269193" description="P2X purinoceptor 4">
    <location>
        <begin position="1"/>
        <end position="388"/>
    </location>
</feature>
<feature type="topological domain" description="Cytoplasmic" evidence="1">
    <location>
        <begin position="1"/>
        <end position="33"/>
    </location>
</feature>
<feature type="transmembrane region" description="Helical; Name=1" evidence="1">
    <location>
        <begin position="34"/>
        <end position="54"/>
    </location>
</feature>
<feature type="topological domain" description="Extracellular" evidence="1">
    <location>
        <begin position="55"/>
        <end position="338"/>
    </location>
</feature>
<feature type="transmembrane region" description="Helical; Name=2" evidence="1">
    <location>
        <begin position="339"/>
        <end position="359"/>
    </location>
</feature>
<feature type="topological domain" description="Cytoplasmic" evidence="1">
    <location>
        <begin position="360"/>
        <end position="388"/>
    </location>
</feature>
<feature type="binding site" evidence="1">
    <location>
        <position position="67"/>
    </location>
    <ligand>
        <name>ATP</name>
        <dbReference type="ChEBI" id="CHEBI:30616"/>
    </ligand>
</feature>
<feature type="binding site" evidence="1">
    <location>
        <position position="67"/>
    </location>
    <ligand>
        <name>CTP</name>
        <dbReference type="ChEBI" id="CHEBI:37563"/>
    </ligand>
</feature>
<feature type="binding site" evidence="1">
    <location>
        <position position="69"/>
    </location>
    <ligand>
        <name>ATP</name>
        <dbReference type="ChEBI" id="CHEBI:30616"/>
    </ligand>
</feature>
<feature type="binding site" evidence="1">
    <location>
        <position position="69"/>
    </location>
    <ligand>
        <name>CTP</name>
        <dbReference type="ChEBI" id="CHEBI:37563"/>
    </ligand>
</feature>
<feature type="binding site" evidence="1">
    <location>
        <position position="186"/>
    </location>
    <ligand>
        <name>ATP</name>
        <dbReference type="ChEBI" id="CHEBI:30616"/>
    </ligand>
</feature>
<feature type="binding site" evidence="1">
    <location>
        <position position="186"/>
    </location>
    <ligand>
        <name>CTP</name>
        <dbReference type="ChEBI" id="CHEBI:37563"/>
    </ligand>
</feature>
<feature type="binding site" evidence="1">
    <location>
        <position position="188"/>
    </location>
    <ligand>
        <name>ATP</name>
        <dbReference type="ChEBI" id="CHEBI:30616"/>
    </ligand>
</feature>
<feature type="binding site" evidence="1">
    <location>
        <position position="293"/>
    </location>
    <ligand>
        <name>ATP</name>
        <dbReference type="ChEBI" id="CHEBI:30616"/>
    </ligand>
</feature>
<feature type="binding site" evidence="1">
    <location>
        <position position="293"/>
    </location>
    <ligand>
        <name>CTP</name>
        <dbReference type="ChEBI" id="CHEBI:37563"/>
    </ligand>
</feature>
<feature type="binding site" evidence="1">
    <location>
        <position position="295"/>
    </location>
    <ligand>
        <name>ATP</name>
        <dbReference type="ChEBI" id="CHEBI:30616"/>
    </ligand>
</feature>
<feature type="binding site" evidence="1">
    <location>
        <position position="295"/>
    </location>
    <ligand>
        <name>CTP</name>
        <dbReference type="ChEBI" id="CHEBI:37563"/>
    </ligand>
</feature>
<feature type="binding site" evidence="1">
    <location>
        <position position="313"/>
    </location>
    <ligand>
        <name>ATP</name>
        <dbReference type="ChEBI" id="CHEBI:30616"/>
    </ligand>
</feature>
<feature type="binding site" evidence="1">
    <location>
        <position position="313"/>
    </location>
    <ligand>
        <name>CTP</name>
        <dbReference type="ChEBI" id="CHEBI:37563"/>
    </ligand>
</feature>
<feature type="glycosylation site" description="N-linked (GlcNAc...) asparagine" evidence="5">
    <location>
        <position position="75"/>
    </location>
</feature>
<feature type="glycosylation site" description="N-linked (GlcNAc...) asparagine" evidence="5">
    <location>
        <position position="110"/>
    </location>
</feature>
<feature type="glycosylation site" description="N-linked (GlcNAc...) asparagine" evidence="5">
    <location>
        <position position="131"/>
    </location>
</feature>
<feature type="glycosylation site" description="N-linked (GlcNAc...) asparagine" evidence="5">
    <location>
        <position position="153"/>
    </location>
</feature>
<feature type="glycosylation site" description="N-linked (GlcNAc...) asparagine" evidence="5">
    <location>
        <position position="184"/>
    </location>
</feature>
<feature type="glycosylation site" description="N-linked (GlcNAc...) asparagine" evidence="5">
    <location>
        <position position="199"/>
    </location>
</feature>
<feature type="glycosylation site" description="N-linked (GlcNAc...) asparagine" evidence="5">
    <location>
        <position position="208"/>
    </location>
</feature>
<feature type="disulfide bond" evidence="1">
    <location>
        <begin position="116"/>
        <end position="165"/>
    </location>
</feature>
<feature type="disulfide bond" evidence="1">
    <location>
        <begin position="126"/>
        <end position="149"/>
    </location>
</feature>
<feature type="disulfide bond" evidence="1">
    <location>
        <begin position="132"/>
        <end position="159"/>
    </location>
</feature>
<feature type="disulfide bond" evidence="1">
    <location>
        <begin position="217"/>
        <end position="227"/>
    </location>
</feature>
<feature type="disulfide bond" evidence="1">
    <location>
        <begin position="261"/>
        <end position="270"/>
    </location>
</feature>
<keyword id="KW-0067">ATP-binding</keyword>
<keyword id="KW-1003">Cell membrane</keyword>
<keyword id="KW-1015">Disulfide bond</keyword>
<keyword id="KW-0325">Glycoprotein</keyword>
<keyword id="KW-0407">Ion channel</keyword>
<keyword id="KW-0406">Ion transport</keyword>
<keyword id="KW-1071">Ligand-gated ion channel</keyword>
<keyword id="KW-0458">Lysosome</keyword>
<keyword id="KW-0472">Membrane</keyword>
<keyword id="KW-0547">Nucleotide-binding</keyword>
<keyword id="KW-0675">Receptor</keyword>
<keyword id="KW-1185">Reference proteome</keyword>
<keyword id="KW-0812">Transmembrane</keyword>
<keyword id="KW-1133">Transmembrane helix</keyword>
<keyword id="KW-0813">Transport</keyword>
<accession>Q5E9U1</accession>
<reference key="1">
    <citation type="journal article" date="2005" name="BMC Genomics">
        <title>Characterization of 954 bovine full-CDS cDNA sequences.</title>
        <authorList>
            <person name="Harhay G.P."/>
            <person name="Sonstegard T.S."/>
            <person name="Keele J.W."/>
            <person name="Heaton M.P."/>
            <person name="Clawson M.L."/>
            <person name="Snelling W.M."/>
            <person name="Wiedmann R.T."/>
            <person name="Van Tassell C.P."/>
            <person name="Smith T.P.L."/>
        </authorList>
    </citation>
    <scope>NUCLEOTIDE SEQUENCE [LARGE SCALE MRNA]</scope>
</reference>
<reference key="2">
    <citation type="submission" date="2006-08" db="EMBL/GenBank/DDBJ databases">
        <authorList>
            <consortium name="NIH - Mammalian Gene Collection (MGC) project"/>
        </authorList>
    </citation>
    <scope>NUCLEOTIDE SEQUENCE [LARGE SCALE MRNA]</scope>
    <source>
        <strain>Hereford</strain>
        <tissue>Brain cortex</tissue>
    </source>
</reference>
<gene>
    <name type="primary">P2RX4</name>
</gene>
<proteinExistence type="evidence at transcript level"/>